<feature type="chain" id="PRO_0000262406" description="N-succinylglutamate 5-semialdehyde dehydrogenase">
    <location>
        <begin position="1"/>
        <end position="495"/>
    </location>
</feature>
<feature type="active site" evidence="1">
    <location>
        <position position="251"/>
    </location>
</feature>
<feature type="active site" evidence="1">
    <location>
        <position position="285"/>
    </location>
</feature>
<feature type="binding site" evidence="1">
    <location>
        <begin position="228"/>
        <end position="233"/>
    </location>
    <ligand>
        <name>NAD(+)</name>
        <dbReference type="ChEBI" id="CHEBI:57540"/>
    </ligand>
</feature>
<dbReference type="EC" id="1.2.1.71" evidence="1"/>
<dbReference type="EMBL" id="CR628336">
    <property type="protein sequence ID" value="CAH12824.1"/>
    <property type="molecule type" value="Genomic_DNA"/>
</dbReference>
<dbReference type="RefSeq" id="WP_011213978.1">
    <property type="nucleotide sequence ID" value="NC_006368.1"/>
</dbReference>
<dbReference type="SMR" id="Q5X4K4"/>
<dbReference type="KEGG" id="lpp:lpp1672"/>
<dbReference type="LegioList" id="lpp1672"/>
<dbReference type="HOGENOM" id="CLU_005391_1_0_6"/>
<dbReference type="UniPathway" id="UPA00185">
    <property type="reaction ID" value="UER00282"/>
</dbReference>
<dbReference type="GO" id="GO:0043824">
    <property type="term" value="F:succinylglutamate-semialdehyde dehydrogenase activity"/>
    <property type="evidence" value="ECO:0007669"/>
    <property type="project" value="UniProtKB-EC"/>
</dbReference>
<dbReference type="GO" id="GO:0019544">
    <property type="term" value="P:arginine catabolic process to glutamate"/>
    <property type="evidence" value="ECO:0007669"/>
    <property type="project" value="UniProtKB-UniRule"/>
</dbReference>
<dbReference type="GO" id="GO:0019545">
    <property type="term" value="P:arginine catabolic process to succinate"/>
    <property type="evidence" value="ECO:0007669"/>
    <property type="project" value="UniProtKB-UniRule"/>
</dbReference>
<dbReference type="CDD" id="cd07095">
    <property type="entry name" value="ALDH_SGSD_AstD"/>
    <property type="match status" value="1"/>
</dbReference>
<dbReference type="FunFam" id="3.40.605.10:FF:000010">
    <property type="entry name" value="N-succinylglutamate 5-semialdehyde dehydrogenase"/>
    <property type="match status" value="1"/>
</dbReference>
<dbReference type="Gene3D" id="3.40.605.10">
    <property type="entry name" value="Aldehyde Dehydrogenase, Chain A, domain 1"/>
    <property type="match status" value="1"/>
</dbReference>
<dbReference type="Gene3D" id="3.40.309.10">
    <property type="entry name" value="Aldehyde Dehydrogenase, Chain A, domain 2"/>
    <property type="match status" value="1"/>
</dbReference>
<dbReference type="HAMAP" id="MF_01174">
    <property type="entry name" value="Aldedh_AstD"/>
    <property type="match status" value="1"/>
</dbReference>
<dbReference type="InterPro" id="IPR016161">
    <property type="entry name" value="Ald_DH/histidinol_DH"/>
</dbReference>
<dbReference type="InterPro" id="IPR016163">
    <property type="entry name" value="Ald_DH_C"/>
</dbReference>
<dbReference type="InterPro" id="IPR029510">
    <property type="entry name" value="Ald_DH_CS_GLU"/>
</dbReference>
<dbReference type="InterPro" id="IPR016162">
    <property type="entry name" value="Ald_DH_N"/>
</dbReference>
<dbReference type="InterPro" id="IPR015590">
    <property type="entry name" value="Aldehyde_DH_dom"/>
</dbReference>
<dbReference type="InterPro" id="IPR017649">
    <property type="entry name" value="SuccinylGlu_semiald_DH_AstD"/>
</dbReference>
<dbReference type="NCBIfam" id="TIGR03240">
    <property type="entry name" value="arg_catab_astD"/>
    <property type="match status" value="1"/>
</dbReference>
<dbReference type="NCBIfam" id="NF006992">
    <property type="entry name" value="PRK09457.1"/>
    <property type="match status" value="1"/>
</dbReference>
<dbReference type="PANTHER" id="PTHR11699">
    <property type="entry name" value="ALDEHYDE DEHYDROGENASE-RELATED"/>
    <property type="match status" value="1"/>
</dbReference>
<dbReference type="Pfam" id="PF00171">
    <property type="entry name" value="Aldedh"/>
    <property type="match status" value="1"/>
</dbReference>
<dbReference type="SUPFAM" id="SSF53720">
    <property type="entry name" value="ALDH-like"/>
    <property type="match status" value="1"/>
</dbReference>
<dbReference type="PROSITE" id="PS00687">
    <property type="entry name" value="ALDEHYDE_DEHYDR_GLU"/>
    <property type="match status" value="1"/>
</dbReference>
<proteinExistence type="inferred from homology"/>
<sequence>MSKLQIIQSKGQYINGEWIKGNGLILESTNPASGTLLWQGNNATDEEITHACYIAHCALKSWANTSFEERARYTIAFVEQVEKNRDQLARLISLETGKPLWESQTEVSSVIGKVNLSIQAYQERTWPKQTETAEANACLRFKPHGVVVVLGAFNFPAHLSNGHIVPALLAGNTVLYKPSEHTPAVAELIIQCWHNSGLPPGVINCLQGNANCGNTLLSQDIQGVYFTGSYATGLRIHQQFCNRPEVILALEMGGNNPLVIDEVKDINAAVYHTMLSTMITAGQRCTCARRIIIPDSQTGDLFLERFAKACKLMRIGSFDSQPEPFIGPVINHVQALKHLHAQKQLIEIGGEIILPMSLLVEYTGLISPGIIDMTRAKNPPDEEIFAPFAQIYRYNHFDEAIQLANQTRYGLSAGLLSDNKDHYLQFYQHIRAGLINWNRPTTGAASSLPFGGVGCSGNHRPSAYFAADYCAYPVASMEQPLLTTPAQRLPGLVLE</sequence>
<name>ASTD_LEGPA</name>
<keyword id="KW-0056">Arginine metabolism</keyword>
<keyword id="KW-0520">NAD</keyword>
<keyword id="KW-0560">Oxidoreductase</keyword>
<organism>
    <name type="scientific">Legionella pneumophila (strain Paris)</name>
    <dbReference type="NCBI Taxonomy" id="297246"/>
    <lineage>
        <taxon>Bacteria</taxon>
        <taxon>Pseudomonadati</taxon>
        <taxon>Pseudomonadota</taxon>
        <taxon>Gammaproteobacteria</taxon>
        <taxon>Legionellales</taxon>
        <taxon>Legionellaceae</taxon>
        <taxon>Legionella</taxon>
    </lineage>
</organism>
<accession>Q5X4K4</accession>
<comment type="function">
    <text evidence="1">Catalyzes the NAD-dependent reduction of succinylglutamate semialdehyde into succinylglutamate.</text>
</comment>
<comment type="catalytic activity">
    <reaction evidence="1">
        <text>N-succinyl-L-glutamate 5-semialdehyde + NAD(+) + H2O = N-succinyl-L-glutamate + NADH + 2 H(+)</text>
        <dbReference type="Rhea" id="RHEA:10812"/>
        <dbReference type="ChEBI" id="CHEBI:15377"/>
        <dbReference type="ChEBI" id="CHEBI:15378"/>
        <dbReference type="ChEBI" id="CHEBI:57540"/>
        <dbReference type="ChEBI" id="CHEBI:57945"/>
        <dbReference type="ChEBI" id="CHEBI:58520"/>
        <dbReference type="ChEBI" id="CHEBI:58763"/>
        <dbReference type="EC" id="1.2.1.71"/>
    </reaction>
</comment>
<comment type="pathway">
    <text evidence="1">Amino-acid degradation; L-arginine degradation via AST pathway; L-glutamate and succinate from L-arginine: step 4/5.</text>
</comment>
<comment type="similarity">
    <text evidence="1">Belongs to the aldehyde dehydrogenase family. AstD subfamily.</text>
</comment>
<protein>
    <recommendedName>
        <fullName evidence="1">N-succinylglutamate 5-semialdehyde dehydrogenase</fullName>
        <ecNumber evidence="1">1.2.1.71</ecNumber>
    </recommendedName>
    <alternativeName>
        <fullName evidence="1">Succinylglutamic semialdehyde dehydrogenase</fullName>
        <shortName evidence="1">SGSD</shortName>
    </alternativeName>
</protein>
<evidence type="ECO:0000255" key="1">
    <source>
        <dbReference type="HAMAP-Rule" id="MF_01174"/>
    </source>
</evidence>
<reference key="1">
    <citation type="journal article" date="2004" name="Nat. Genet.">
        <title>Evidence in the Legionella pneumophila genome for exploitation of host cell functions and high genome plasticity.</title>
        <authorList>
            <person name="Cazalet C."/>
            <person name="Rusniok C."/>
            <person name="Brueggemann H."/>
            <person name="Zidane N."/>
            <person name="Magnier A."/>
            <person name="Ma L."/>
            <person name="Tichit M."/>
            <person name="Jarraud S."/>
            <person name="Bouchier C."/>
            <person name="Vandenesch F."/>
            <person name="Kunst F."/>
            <person name="Etienne J."/>
            <person name="Glaser P."/>
            <person name="Buchrieser C."/>
        </authorList>
    </citation>
    <scope>NUCLEOTIDE SEQUENCE [LARGE SCALE GENOMIC DNA]</scope>
    <source>
        <strain>Paris</strain>
    </source>
</reference>
<gene>
    <name evidence="1" type="primary">astD</name>
    <name type="ordered locus">lpp1672</name>
</gene>